<evidence type="ECO:0000255" key="1">
    <source>
        <dbReference type="HAMAP-Rule" id="MF_01007"/>
    </source>
</evidence>
<accession>Q3AGW9</accession>
<comment type="function">
    <text evidence="1">Specifically methylates the N4 position of cytidine in position 1402 (C1402) of 16S rRNA.</text>
</comment>
<comment type="catalytic activity">
    <reaction evidence="1">
        <text>cytidine(1402) in 16S rRNA + S-adenosyl-L-methionine = N(4)-methylcytidine(1402) in 16S rRNA + S-adenosyl-L-homocysteine + H(+)</text>
        <dbReference type="Rhea" id="RHEA:42928"/>
        <dbReference type="Rhea" id="RHEA-COMP:10286"/>
        <dbReference type="Rhea" id="RHEA-COMP:10287"/>
        <dbReference type="ChEBI" id="CHEBI:15378"/>
        <dbReference type="ChEBI" id="CHEBI:57856"/>
        <dbReference type="ChEBI" id="CHEBI:59789"/>
        <dbReference type="ChEBI" id="CHEBI:74506"/>
        <dbReference type="ChEBI" id="CHEBI:82748"/>
        <dbReference type="EC" id="2.1.1.199"/>
    </reaction>
</comment>
<comment type="subcellular location">
    <subcellularLocation>
        <location evidence="1">Cytoplasm</location>
    </subcellularLocation>
</comment>
<comment type="similarity">
    <text evidence="1">Belongs to the methyltransferase superfamily. RsmH family.</text>
</comment>
<protein>
    <recommendedName>
        <fullName evidence="1">Ribosomal RNA small subunit methyltransferase H</fullName>
        <ecNumber evidence="1">2.1.1.199</ecNumber>
    </recommendedName>
    <alternativeName>
        <fullName evidence="1">16S rRNA m(4)C1402 methyltransferase</fullName>
    </alternativeName>
    <alternativeName>
        <fullName evidence="1">rRNA (cytosine-N(4)-)-methyltransferase RsmH</fullName>
    </alternativeName>
</protein>
<feature type="chain" id="PRO_0000387180" description="Ribosomal RNA small subunit methyltransferase H">
    <location>
        <begin position="1"/>
        <end position="294"/>
    </location>
</feature>
<feature type="binding site" evidence="1">
    <location>
        <begin position="36"/>
        <end position="38"/>
    </location>
    <ligand>
        <name>S-adenosyl-L-methionine</name>
        <dbReference type="ChEBI" id="CHEBI:59789"/>
    </ligand>
</feature>
<feature type="binding site" evidence="1">
    <location>
        <position position="55"/>
    </location>
    <ligand>
        <name>S-adenosyl-L-methionine</name>
        <dbReference type="ChEBI" id="CHEBI:59789"/>
    </ligand>
</feature>
<feature type="binding site" evidence="1">
    <location>
        <position position="82"/>
    </location>
    <ligand>
        <name>S-adenosyl-L-methionine</name>
        <dbReference type="ChEBI" id="CHEBI:59789"/>
    </ligand>
</feature>
<feature type="binding site" evidence="1">
    <location>
        <position position="97"/>
    </location>
    <ligand>
        <name>S-adenosyl-L-methionine</name>
        <dbReference type="ChEBI" id="CHEBI:59789"/>
    </ligand>
</feature>
<feature type="binding site" evidence="1">
    <location>
        <position position="104"/>
    </location>
    <ligand>
        <name>S-adenosyl-L-methionine</name>
        <dbReference type="ChEBI" id="CHEBI:59789"/>
    </ligand>
</feature>
<name>RSMH_SYNSC</name>
<keyword id="KW-0963">Cytoplasm</keyword>
<keyword id="KW-0489">Methyltransferase</keyword>
<keyword id="KW-0698">rRNA processing</keyword>
<keyword id="KW-0949">S-adenosyl-L-methionine</keyword>
<keyword id="KW-0808">Transferase</keyword>
<proteinExistence type="inferred from homology"/>
<dbReference type="EC" id="2.1.1.199" evidence="1"/>
<dbReference type="EMBL" id="CP000110">
    <property type="protein sequence ID" value="ABB36163.1"/>
    <property type="molecule type" value="Genomic_DNA"/>
</dbReference>
<dbReference type="RefSeq" id="WP_011365359.1">
    <property type="nucleotide sequence ID" value="NC_007516.1"/>
</dbReference>
<dbReference type="SMR" id="Q3AGW9"/>
<dbReference type="STRING" id="110662.Syncc9605_2431"/>
<dbReference type="KEGG" id="syd:Syncc9605_2431"/>
<dbReference type="eggNOG" id="COG0275">
    <property type="taxonomic scope" value="Bacteria"/>
</dbReference>
<dbReference type="HOGENOM" id="CLU_038422_3_0_3"/>
<dbReference type="OrthoDB" id="9806637at2"/>
<dbReference type="GO" id="GO:0005737">
    <property type="term" value="C:cytoplasm"/>
    <property type="evidence" value="ECO:0007669"/>
    <property type="project" value="UniProtKB-SubCell"/>
</dbReference>
<dbReference type="GO" id="GO:0071424">
    <property type="term" value="F:rRNA (cytosine-N4-)-methyltransferase activity"/>
    <property type="evidence" value="ECO:0007669"/>
    <property type="project" value="UniProtKB-UniRule"/>
</dbReference>
<dbReference type="GO" id="GO:0070475">
    <property type="term" value="P:rRNA base methylation"/>
    <property type="evidence" value="ECO:0007669"/>
    <property type="project" value="UniProtKB-UniRule"/>
</dbReference>
<dbReference type="Gene3D" id="1.10.150.170">
    <property type="entry name" value="Putative methyltransferase TM0872, insert domain"/>
    <property type="match status" value="1"/>
</dbReference>
<dbReference type="Gene3D" id="3.40.50.150">
    <property type="entry name" value="Vaccinia Virus protein VP39"/>
    <property type="match status" value="1"/>
</dbReference>
<dbReference type="HAMAP" id="MF_01007">
    <property type="entry name" value="16SrRNA_methyltr_H"/>
    <property type="match status" value="1"/>
</dbReference>
<dbReference type="InterPro" id="IPR002903">
    <property type="entry name" value="RsmH"/>
</dbReference>
<dbReference type="InterPro" id="IPR023397">
    <property type="entry name" value="SAM-dep_MeTrfase_MraW_recog"/>
</dbReference>
<dbReference type="InterPro" id="IPR029063">
    <property type="entry name" value="SAM-dependent_MTases_sf"/>
</dbReference>
<dbReference type="NCBIfam" id="TIGR00006">
    <property type="entry name" value="16S rRNA (cytosine(1402)-N(4))-methyltransferase RsmH"/>
    <property type="match status" value="1"/>
</dbReference>
<dbReference type="PANTHER" id="PTHR11265:SF0">
    <property type="entry name" value="12S RRNA N4-METHYLCYTIDINE METHYLTRANSFERASE"/>
    <property type="match status" value="1"/>
</dbReference>
<dbReference type="PANTHER" id="PTHR11265">
    <property type="entry name" value="S-ADENOSYL-METHYLTRANSFERASE MRAW"/>
    <property type="match status" value="1"/>
</dbReference>
<dbReference type="Pfam" id="PF01795">
    <property type="entry name" value="Methyltransf_5"/>
    <property type="match status" value="1"/>
</dbReference>
<dbReference type="PIRSF" id="PIRSF004486">
    <property type="entry name" value="MraW"/>
    <property type="match status" value="1"/>
</dbReference>
<dbReference type="SUPFAM" id="SSF81799">
    <property type="entry name" value="Putative methyltransferase TM0872, insert domain"/>
    <property type="match status" value="1"/>
</dbReference>
<dbReference type="SUPFAM" id="SSF53335">
    <property type="entry name" value="S-adenosyl-L-methionine-dependent methyltransferases"/>
    <property type="match status" value="1"/>
</dbReference>
<gene>
    <name evidence="1" type="primary">rsmH</name>
    <name type="synonym">mraW</name>
    <name type="ordered locus">Syncc9605_2431</name>
</gene>
<reference key="1">
    <citation type="submission" date="2005-07" db="EMBL/GenBank/DDBJ databases">
        <title>Complete sequence of Synechococcus sp. CC9605.</title>
        <authorList>
            <consortium name="US DOE Joint Genome Institute"/>
            <person name="Copeland A."/>
            <person name="Lucas S."/>
            <person name="Lapidus A."/>
            <person name="Barry K."/>
            <person name="Detter J.C."/>
            <person name="Glavina T."/>
            <person name="Hammon N."/>
            <person name="Israni S."/>
            <person name="Pitluck S."/>
            <person name="Schmutz J."/>
            <person name="Martinez M."/>
            <person name="Larimer F."/>
            <person name="Land M."/>
            <person name="Kyrpides N."/>
            <person name="Ivanova N."/>
            <person name="Richardson P."/>
        </authorList>
    </citation>
    <scope>NUCLEOTIDE SEQUENCE [LARGE SCALE GENOMIC DNA]</scope>
    <source>
        <strain>CC9605</strain>
    </source>
</reference>
<organism>
    <name type="scientific">Synechococcus sp. (strain CC9605)</name>
    <dbReference type="NCBI Taxonomy" id="110662"/>
    <lineage>
        <taxon>Bacteria</taxon>
        <taxon>Bacillati</taxon>
        <taxon>Cyanobacteriota</taxon>
        <taxon>Cyanophyceae</taxon>
        <taxon>Synechococcales</taxon>
        <taxon>Synechococcaceae</taxon>
        <taxon>Synechococcus</taxon>
    </lineage>
</organism>
<sequence length="294" mass="32186">MPPFSHVPVLADAVLDAARRIPRPDGLLIDATLGGGGHSALLLEQHPGLRLIGLDQDATARAAAAERLASFGDRVSIVATNFADYVPPEPAVMVLADLGVSSPQLDVAERGFSFRLDGPLDMRMNAGGEGETAAELIDRLEENELADLIYGYGEERLSRRIARRIKADLKDRGSYDGTAALAYAVAGCYPPKSRRGRIHPATRTFQALRIAVNDELGVLDRLLQQAPDWLEPDGLLGIISFHSLEDRRVKTAFLRDERLQRITRKPVVATEQEEEANPRTRSAKWRVAQRLAAA</sequence>